<feature type="signal peptide">
    <location>
        <begin position="1"/>
        <end position="23"/>
    </location>
</feature>
<feature type="chain" id="PRO_0000026723" description="Ovocalyxin-32">
    <location>
        <begin position="24"/>
        <end position="275"/>
    </location>
</feature>
<feature type="domain" description="Cystatin LXN-type 1" evidence="1">
    <location>
        <begin position="32"/>
        <end position="131"/>
    </location>
</feature>
<feature type="domain" description="Cystatin LXN-type 2" evidence="1">
    <location>
        <begin position="151"/>
        <end position="255"/>
    </location>
</feature>
<feature type="region of interest" description="Disordered" evidence="2">
    <location>
        <begin position="254"/>
        <end position="275"/>
    </location>
</feature>
<feature type="compositionally biased region" description="Low complexity" evidence="2">
    <location>
        <begin position="256"/>
        <end position="268"/>
    </location>
</feature>
<comment type="function">
    <text>Component of the matrix of the eggshell.</text>
</comment>
<comment type="subcellular location">
    <subcellularLocation>
        <location>Secreted</location>
    </subcellularLocation>
</comment>
<comment type="tissue specificity">
    <text evidence="3">Expressed at high levels in the uterine and isthmus regions of the oviduct, and concentrated in the eggshell.</text>
</comment>
<comment type="similarity">
    <text evidence="4">Belongs to the protease inhibitor I47 (latexin) family.</text>
</comment>
<protein>
    <recommendedName>
        <fullName>Ovocalyxin-32</fullName>
        <shortName>OCX-32</shortName>
    </recommendedName>
    <alternativeName>
        <fullName>32 kDa eggshell matrix protein</fullName>
    </alternativeName>
</protein>
<keyword id="KW-0091">Biomineralization</keyword>
<keyword id="KW-0903">Direct protein sequencing</keyword>
<keyword id="KW-0646">Protease inhibitor</keyword>
<keyword id="KW-1185">Reference proteome</keyword>
<keyword id="KW-0677">Repeat</keyword>
<keyword id="KW-0964">Secreted</keyword>
<keyword id="KW-0732">Signal</keyword>
<organism>
    <name type="scientific">Gallus gallus</name>
    <name type="common">Chicken</name>
    <dbReference type="NCBI Taxonomy" id="9031"/>
    <lineage>
        <taxon>Eukaryota</taxon>
        <taxon>Metazoa</taxon>
        <taxon>Chordata</taxon>
        <taxon>Craniata</taxon>
        <taxon>Vertebrata</taxon>
        <taxon>Euteleostomi</taxon>
        <taxon>Archelosauria</taxon>
        <taxon>Archosauria</taxon>
        <taxon>Dinosauria</taxon>
        <taxon>Saurischia</taxon>
        <taxon>Theropoda</taxon>
        <taxon>Coelurosauria</taxon>
        <taxon>Aves</taxon>
        <taxon>Neognathae</taxon>
        <taxon>Galloanserae</taxon>
        <taxon>Galliformes</taxon>
        <taxon>Phasianidae</taxon>
        <taxon>Phasianinae</taxon>
        <taxon>Gallus</taxon>
    </lineage>
</organism>
<accession>Q90YI1</accession>
<sequence>MPGLRAALPAALLLLSSFPPAAAERLPWPQVPGVMRPLNPSHREAVWAAWTALHYINSHEASPSRPLALHKVVKAASKMIPRLGWKYYVHCTTEGYIHGENAGSCFATVLYLKKSPPVVHGKCVHAQNKKQIQEEDHRFYEYLQHQKKPITANYIPDSNGNIAHDHLQLWGLAIVGSSYIMWKQSTEHTGYLLAQVSSVKQQIRKDNAVAFKFIVLLHEIPTQQLNVCHMYLVWTLGHPIRVKYSCAPDNHGLEDGSGQDSGSAAGTSHETKGNF</sequence>
<evidence type="ECO:0000255" key="1">
    <source>
        <dbReference type="PROSITE-ProRule" id="PRU01377"/>
    </source>
</evidence>
<evidence type="ECO:0000256" key="2">
    <source>
        <dbReference type="SAM" id="MobiDB-lite"/>
    </source>
</evidence>
<evidence type="ECO:0000269" key="3">
    <source>
    </source>
</evidence>
<evidence type="ECO:0000305" key="4"/>
<reference key="1">
    <citation type="journal article" date="2001" name="J. Biol. Chem.">
        <title>Ovocalyxin-32, a novel chicken eggshell matrix protein. isolation, amino acid sequencing, cloning, and immunocytochemical localization.</title>
        <authorList>
            <person name="Gautron J."/>
            <person name="Hincke M.T."/>
            <person name="Mann K."/>
            <person name="Panheleux M."/>
            <person name="Bain M."/>
            <person name="McKee M.D."/>
            <person name="Solomon S.E."/>
            <person name="Nys Y."/>
        </authorList>
    </citation>
    <scope>NUCLEOTIDE SEQUENCE [MRNA]</scope>
    <scope>PARTIAL PROTEIN SEQUENCE</scope>
    <scope>TISSUE SPECIFICITY</scope>
</reference>
<dbReference type="EMBL" id="AJ307060">
    <property type="protein sequence ID" value="CAC44378.2"/>
    <property type="molecule type" value="mRNA"/>
</dbReference>
<dbReference type="RefSeq" id="NP_989865.1">
    <property type="nucleotide sequence ID" value="NM_204534.4"/>
</dbReference>
<dbReference type="SMR" id="Q90YI1"/>
<dbReference type="FunCoup" id="Q90YI1">
    <property type="interactions" value="96"/>
</dbReference>
<dbReference type="STRING" id="9031.ENSGALP00000015618"/>
<dbReference type="MEROPS" id="I47.002"/>
<dbReference type="PaxDb" id="9031-ENSGALP00000015618"/>
<dbReference type="GeneID" id="395209"/>
<dbReference type="KEGG" id="gga:395209"/>
<dbReference type="CTD" id="5918"/>
<dbReference type="VEuPathDB" id="HostDB:geneid_395209"/>
<dbReference type="eggNOG" id="ENOG502S0TS">
    <property type="taxonomic scope" value="Eukaryota"/>
</dbReference>
<dbReference type="InParanoid" id="Q90YI1"/>
<dbReference type="OrthoDB" id="9254763at2759"/>
<dbReference type="PRO" id="PR:Q90YI1"/>
<dbReference type="Proteomes" id="UP000000539">
    <property type="component" value="Unassembled WGS sequence"/>
</dbReference>
<dbReference type="GO" id="GO:0005576">
    <property type="term" value="C:extracellular region"/>
    <property type="evidence" value="ECO:0000314"/>
    <property type="project" value="AgBase"/>
</dbReference>
<dbReference type="GO" id="GO:0005615">
    <property type="term" value="C:extracellular space"/>
    <property type="evidence" value="ECO:0000314"/>
    <property type="project" value="AgBase"/>
</dbReference>
<dbReference type="GO" id="GO:0008191">
    <property type="term" value="F:metalloendopeptidase inhibitor activity"/>
    <property type="evidence" value="ECO:0000318"/>
    <property type="project" value="GO_Central"/>
</dbReference>
<dbReference type="GO" id="GO:0031214">
    <property type="term" value="P:biomineral tissue development"/>
    <property type="evidence" value="ECO:0007669"/>
    <property type="project" value="UniProtKB-KW"/>
</dbReference>
<dbReference type="Gene3D" id="3.10.450.10">
    <property type="match status" value="2"/>
</dbReference>
<dbReference type="InterPro" id="IPR049897">
    <property type="entry name" value="CYSTATIN_LXN"/>
</dbReference>
<dbReference type="InterPro" id="IPR046350">
    <property type="entry name" value="Cystatin_sf"/>
</dbReference>
<dbReference type="InterPro" id="IPR009684">
    <property type="entry name" value="Latexin"/>
</dbReference>
<dbReference type="PANTHER" id="PTHR28591">
    <property type="entry name" value="LATEXIN"/>
    <property type="match status" value="1"/>
</dbReference>
<dbReference type="PANTHER" id="PTHR28591:SF2">
    <property type="entry name" value="RETINOIC ACID RECEPTOR RESPONDER PROTEIN 1"/>
    <property type="match status" value="1"/>
</dbReference>
<dbReference type="Pfam" id="PF06907">
    <property type="entry name" value="LXN"/>
    <property type="match status" value="1"/>
</dbReference>
<dbReference type="PIRSF" id="PIRSF011132">
    <property type="entry name" value="Prot_inh_latexin"/>
    <property type="match status" value="1"/>
</dbReference>
<dbReference type="SUPFAM" id="SSF54403">
    <property type="entry name" value="Cystatin/monellin"/>
    <property type="match status" value="2"/>
</dbReference>
<dbReference type="PROSITE" id="PS52033">
    <property type="entry name" value="CYSTATIN_LXN"/>
    <property type="match status" value="2"/>
</dbReference>
<proteinExistence type="evidence at protein level"/>
<name>OCX32_CHICK</name>